<organism>
    <name type="scientific">Chlorocebus aethiops</name>
    <name type="common">Green monkey</name>
    <name type="synonym">Cercopithecus aethiops</name>
    <dbReference type="NCBI Taxonomy" id="9534"/>
    <lineage>
        <taxon>Eukaryota</taxon>
        <taxon>Metazoa</taxon>
        <taxon>Chordata</taxon>
        <taxon>Craniata</taxon>
        <taxon>Vertebrata</taxon>
        <taxon>Euteleostomi</taxon>
        <taxon>Mammalia</taxon>
        <taxon>Eutheria</taxon>
        <taxon>Euarchontoglires</taxon>
        <taxon>Primates</taxon>
        <taxon>Haplorrhini</taxon>
        <taxon>Catarrhini</taxon>
        <taxon>Cercopithecidae</taxon>
        <taxon>Cercopithecinae</taxon>
        <taxon>Chlorocebus</taxon>
    </lineage>
</organism>
<gene>
    <name evidence="3" type="primary">KCNS1</name>
</gene>
<comment type="function">
    <text evidence="1 3">Potassium channel regulatory subunit that modulate the delayed rectifier voltage-gated potassium channel activity of KCNB1 and KCNB2 by altering their kinetics, expression levels, and shifting the half-inactivation potential to more polarized values. While it does not form functional channels on its own, it can form functional heterotetrameric channels with KCNB1 and KCNB2 (By similarity). Each regulatory subunit has unique regulatory properties that can lead to extensive inhibition, significant changes in kinetics, and/or substantial shifts in the voltage dependencies of the inactivation process (By similarity).</text>
</comment>
<comment type="subunit">
    <text evidence="1 3">Heterotetramer with KCNB1 (By similarity). Heterotetramer with KCNB2 (By similarity). Does not form homomultimers (By similarity).</text>
</comment>
<comment type="subcellular location">
    <subcellularLocation>
        <location evidence="3">Cell membrane</location>
        <topology evidence="3">Multi-pass membrane protein</topology>
    </subcellularLocation>
    <text evidence="3">May not reach the plasma membrane but remain in an intracellular compartment in the absence of KCNB1 or KCNB2.</text>
</comment>
<comment type="domain">
    <text evidence="2">The transmembrane segment S4 functions as a voltage-sensor and is characterized by a series of positively charged amino acids at every third position. Channel opening and closing is effected by a conformation change that affects the position and orientation of the voltage-sensor paddle formed by S3 and S4 within the membrane. A transmembrane electric field that is positive inside would push the positively charged S4 segment outwards, thereby opening the pore, while a field that is negative inside would pull the S4 segment inwards and close the pore. Changes in the position and orientation of S4 are then transmitted to the activation gate formed by the inner helix bundle via the S4-S5 linker region.</text>
</comment>
<comment type="similarity">
    <text evidence="5">Belongs to the potassium channel family. S (TC 1.A.1.2) subfamily. Kv9.1/KCNS1 sub-subfamily.</text>
</comment>
<proteinExistence type="inferred from homology"/>
<evidence type="ECO:0000250" key="1">
    <source>
        <dbReference type="UniProtKB" id="O35173"/>
    </source>
</evidence>
<evidence type="ECO:0000250" key="2">
    <source>
        <dbReference type="UniProtKB" id="P63142"/>
    </source>
</evidence>
<evidence type="ECO:0000250" key="3">
    <source>
        <dbReference type="UniProtKB" id="Q96KK3"/>
    </source>
</evidence>
<evidence type="ECO:0000256" key="4">
    <source>
        <dbReference type="SAM" id="MobiDB-lite"/>
    </source>
</evidence>
<evidence type="ECO:0000305" key="5"/>
<name>KCNS1_CHLAE</name>
<reference key="1">
    <citation type="journal article" date="2007" name="Genome Res.">
        <title>Comparative sequence analyses reveal rapid and divergent evolutionary changes of the WFDC locus in the primate lineage.</title>
        <authorList>
            <consortium name="NISC comparative sequencing program"/>
            <person name="Hurle B."/>
            <person name="Swanson W."/>
            <person name="Green E.D."/>
        </authorList>
    </citation>
    <scope>NUCLEOTIDE SEQUENCE [GENOMIC DNA]</scope>
</reference>
<feature type="chain" id="PRO_0000289614" description="Delayed-rectifier potassium channel regulatory subunit KCNS1">
    <location>
        <begin position="1"/>
        <end position="529"/>
    </location>
</feature>
<feature type="topological domain" description="Cytoplasmic" evidence="2">
    <location>
        <begin position="1"/>
        <end position="217"/>
    </location>
</feature>
<feature type="transmembrane region" description="Helical; Name=Segment S1" evidence="2">
    <location>
        <begin position="218"/>
        <end position="239"/>
    </location>
</feature>
<feature type="topological domain" description="Extracellular" evidence="2">
    <location>
        <begin position="240"/>
        <end position="270"/>
    </location>
</feature>
<feature type="transmembrane region" description="Helical; Name=Segment S2" evidence="2">
    <location>
        <begin position="271"/>
        <end position="293"/>
    </location>
</feature>
<feature type="topological domain" description="Cytoplasmic" evidence="2">
    <location>
        <begin position="294"/>
        <end position="304"/>
    </location>
</feature>
<feature type="transmembrane region" description="Helical; Name=Segment S3" evidence="2">
    <location>
        <begin position="305"/>
        <end position="322"/>
    </location>
</feature>
<feature type="topological domain" description="Extracellular" evidence="2">
    <location>
        <begin position="323"/>
        <end position="340"/>
    </location>
</feature>
<feature type="transmembrane region" description="Helical; Voltage-sensor; Name=Segment S4" evidence="2">
    <location>
        <begin position="341"/>
        <end position="361"/>
    </location>
</feature>
<feature type="topological domain" description="Cytoplasmic" evidence="2">
    <location>
        <begin position="362"/>
        <end position="376"/>
    </location>
</feature>
<feature type="transmembrane region" description="Helical; Name=Segment S5" evidence="2">
    <location>
        <begin position="377"/>
        <end position="398"/>
    </location>
</feature>
<feature type="topological domain" description="Extracellular" evidence="2">
    <location>
        <begin position="399"/>
        <end position="411"/>
    </location>
</feature>
<feature type="intramembrane region" description="Helical; Name=Pore helix" evidence="2">
    <location>
        <begin position="412"/>
        <end position="423"/>
    </location>
</feature>
<feature type="intramembrane region" evidence="2">
    <location>
        <begin position="424"/>
        <end position="431"/>
    </location>
</feature>
<feature type="topological domain" description="Extracellular" evidence="2">
    <location>
        <begin position="432"/>
        <end position="438"/>
    </location>
</feature>
<feature type="transmembrane region" description="Helical; Name=Segment S6" evidence="2">
    <location>
        <begin position="439"/>
        <end position="467"/>
    </location>
</feature>
<feature type="topological domain" description="Cytoplasmic" evidence="2">
    <location>
        <begin position="468"/>
        <end position="529"/>
    </location>
</feature>
<feature type="region of interest" description="Disordered" evidence="4">
    <location>
        <begin position="494"/>
        <end position="529"/>
    </location>
</feature>
<feature type="short sequence motif" description="Selectivity filter" evidence="2">
    <location>
        <begin position="424"/>
        <end position="429"/>
    </location>
</feature>
<feature type="compositionally biased region" description="Basic and acidic residues" evidence="4">
    <location>
        <begin position="502"/>
        <end position="514"/>
    </location>
</feature>
<keyword id="KW-1003">Cell membrane</keyword>
<keyword id="KW-0407">Ion channel</keyword>
<keyword id="KW-0406">Ion transport</keyword>
<keyword id="KW-0472">Membrane</keyword>
<keyword id="KW-0630">Potassium</keyword>
<keyword id="KW-0631">Potassium channel</keyword>
<keyword id="KW-0633">Potassium transport</keyword>
<keyword id="KW-0812">Transmembrane</keyword>
<keyword id="KW-1133">Transmembrane helix</keyword>
<keyword id="KW-0813">Transport</keyword>
<keyword id="KW-0851">Voltage-gated channel</keyword>
<sequence>MLMLLVRGTHYESLRSKVVLPTPLGGRGTEALVSECPSPDTGIRWRQSDEALRVNVGGVRRLLSARALARFPGTRLGRLQAAASEEQARRLCDDYDAAAREFYFDRHPGFFLGLLHFYRTGHLHVLDELCVFAFGQEADYWGLGENALAACCRARYLERRLSQPRAWDEDSDTPSSVDPCPDEISDVQRELARYGAARCGRLRRRLWLTMENPGYSLPSKLFSCVSISVVLASIAAMCIHSLPEYQAREAAAAVAAVAAGRSPEGVRDDPVLRRLEYFCIAWFSFEVSSRLLLAPSTRNFFCHPLNLIDIVSVLPFYLTLLAGVALGDQGGTGGKELGHLGKVVQVFRLMRIFRVLKLARHSTGLRSLGATLKHSYREVGILLLYLAVGVSVFSGVAYTAEKEEDVGFNTIPACWWWGTVSMTTVGYGDVVPVTVAGKLAASGCILGGILVVALPITIIFNKFSHFYRRQKALEAAVRNSNHQEFEDLLSSVDGVSEASLETSRETSQEGRSADLETQAPSEPPHPQMY</sequence>
<protein>
    <recommendedName>
        <fullName evidence="3">Delayed-rectifier potassium channel regulatory subunit KCNS1</fullName>
    </recommendedName>
    <alternativeName>
        <fullName>Delayed-rectifier K(+) channel alpha subunit 1</fullName>
    </alternativeName>
    <alternativeName>
        <fullName evidence="3">Delayed-rectifier potassium channel subunit Kv9.1</fullName>
    </alternativeName>
</protein>
<dbReference type="EMBL" id="DP000048">
    <property type="protein sequence ID" value="ABO53017.1"/>
    <property type="molecule type" value="Genomic_DNA"/>
</dbReference>
<dbReference type="SMR" id="A4K2Y2"/>
<dbReference type="GO" id="GO:0048471">
    <property type="term" value="C:perinuclear region of cytoplasm"/>
    <property type="evidence" value="ECO:0000250"/>
    <property type="project" value="UniProtKB"/>
</dbReference>
<dbReference type="GO" id="GO:0005886">
    <property type="term" value="C:plasma membrane"/>
    <property type="evidence" value="ECO:0000250"/>
    <property type="project" value="UniProtKB"/>
</dbReference>
<dbReference type="GO" id="GO:0008076">
    <property type="term" value="C:voltage-gated potassium channel complex"/>
    <property type="evidence" value="ECO:0000250"/>
    <property type="project" value="UniProtKB"/>
</dbReference>
<dbReference type="GO" id="GO:0005251">
    <property type="term" value="F:delayed rectifier potassium channel activity"/>
    <property type="evidence" value="ECO:0007669"/>
    <property type="project" value="TreeGrafter"/>
</dbReference>
<dbReference type="GO" id="GO:0015459">
    <property type="term" value="F:potassium channel regulator activity"/>
    <property type="evidence" value="ECO:0000250"/>
    <property type="project" value="UniProtKB"/>
</dbReference>
<dbReference type="GO" id="GO:0001508">
    <property type="term" value="P:action potential"/>
    <property type="evidence" value="ECO:0007669"/>
    <property type="project" value="TreeGrafter"/>
</dbReference>
<dbReference type="GO" id="GO:0006813">
    <property type="term" value="P:potassium ion transport"/>
    <property type="evidence" value="ECO:0000250"/>
    <property type="project" value="UniProtKB"/>
</dbReference>
<dbReference type="GO" id="GO:0051260">
    <property type="term" value="P:protein homooligomerization"/>
    <property type="evidence" value="ECO:0007669"/>
    <property type="project" value="InterPro"/>
</dbReference>
<dbReference type="GO" id="GO:1901379">
    <property type="term" value="P:regulation of potassium ion transmembrane transport"/>
    <property type="evidence" value="ECO:0000250"/>
    <property type="project" value="UniProtKB"/>
</dbReference>
<dbReference type="FunFam" id="1.10.287.70:FF:000005">
    <property type="entry name" value="potassium voltage-gated channel subfamily G member 1"/>
    <property type="match status" value="1"/>
</dbReference>
<dbReference type="FunFam" id="3.30.710.10:FF:000102">
    <property type="entry name" value="Potassium voltage-gated channel subfamily S member 1"/>
    <property type="match status" value="1"/>
</dbReference>
<dbReference type="FunFam" id="1.20.120.350:FF:000029">
    <property type="entry name" value="Potassium voltage-gated channel subfamily S member 2"/>
    <property type="match status" value="1"/>
</dbReference>
<dbReference type="Gene3D" id="1.10.287.70">
    <property type="match status" value="1"/>
</dbReference>
<dbReference type="Gene3D" id="3.30.710.10">
    <property type="entry name" value="Potassium Channel Kv1.1, Chain A"/>
    <property type="match status" value="1"/>
</dbReference>
<dbReference type="Gene3D" id="1.20.120.350">
    <property type="entry name" value="Voltage-gated potassium channels. Chain C"/>
    <property type="match status" value="1"/>
</dbReference>
<dbReference type="InterPro" id="IPR000210">
    <property type="entry name" value="BTB/POZ_dom"/>
</dbReference>
<dbReference type="InterPro" id="IPR005821">
    <property type="entry name" value="Ion_trans_dom"/>
</dbReference>
<dbReference type="InterPro" id="IPR003968">
    <property type="entry name" value="K_chnl_volt-dep_Kv"/>
</dbReference>
<dbReference type="InterPro" id="IPR003971">
    <property type="entry name" value="K_chnl_volt-dep_Kv5/Kv9"/>
</dbReference>
<dbReference type="InterPro" id="IPR011333">
    <property type="entry name" value="SKP1/BTB/POZ_sf"/>
</dbReference>
<dbReference type="InterPro" id="IPR003131">
    <property type="entry name" value="T1-type_BTB"/>
</dbReference>
<dbReference type="InterPro" id="IPR028325">
    <property type="entry name" value="VG_K_chnl"/>
</dbReference>
<dbReference type="InterPro" id="IPR027359">
    <property type="entry name" value="Volt_channel_dom_sf"/>
</dbReference>
<dbReference type="PANTHER" id="PTHR11537:SF61">
    <property type="entry name" value="POTASSIUM VOLTAGE-GATED CHANNEL SUBFAMILY S MEMBER 1"/>
    <property type="match status" value="1"/>
</dbReference>
<dbReference type="PANTHER" id="PTHR11537">
    <property type="entry name" value="VOLTAGE-GATED POTASSIUM CHANNEL"/>
    <property type="match status" value="1"/>
</dbReference>
<dbReference type="Pfam" id="PF02214">
    <property type="entry name" value="BTB_2"/>
    <property type="match status" value="1"/>
</dbReference>
<dbReference type="Pfam" id="PF00520">
    <property type="entry name" value="Ion_trans"/>
    <property type="match status" value="1"/>
</dbReference>
<dbReference type="PRINTS" id="PR00169">
    <property type="entry name" value="KCHANNEL"/>
</dbReference>
<dbReference type="PRINTS" id="PR01494">
    <property type="entry name" value="KV9CHANNEL"/>
</dbReference>
<dbReference type="PRINTS" id="PR01491">
    <property type="entry name" value="KVCHANNEL"/>
</dbReference>
<dbReference type="SMART" id="SM00225">
    <property type="entry name" value="BTB"/>
    <property type="match status" value="1"/>
</dbReference>
<dbReference type="SUPFAM" id="SSF54695">
    <property type="entry name" value="POZ domain"/>
    <property type="match status" value="1"/>
</dbReference>
<dbReference type="SUPFAM" id="SSF81324">
    <property type="entry name" value="Voltage-gated potassium channels"/>
    <property type="match status" value="1"/>
</dbReference>
<accession>A4K2Y2</accession>